<proteinExistence type="evidence at transcript level"/>
<comment type="function">
    <text evidence="1 2">Component of the spliceosome C complex required for the selective processing of microRNAs during embryonic stem cell differentiation (By similarity). Required for the biogenesis of all miRNAs from the pri-miR-17-92 primary transcript except miR-92a (By similarity). Only required for the biogenesis of miR-290 and miR-96 from the pri-miR-290-295 and pri-miR-96-183 primary transcripts, respectively (By similarity). Required during the transition of embryonic stem cells (ESCs) from the naive to primed state (By similarity). By enhancing miRNA biogenesis, promotes exit of ESCs from the naive state to an intermediate state of poised pluripotency, which precedes transition to the primed state (By similarity). Involved in pre-mRNA splicing as component of the spliceosome.</text>
</comment>
<comment type="subunit">
    <text evidence="1 2">Identified in the spliceosome C complex. Component of the XAB2 complex, a multimeric protein complex composed of XAB2, PRPF19, AQR, ZNF830, ISY1, and PPIE. Identified in a pentameric intron-binding (IB) complex composed of AQR, XAB2, ISY1, ZNF830 and PPIE that is incorporated into the spliceosome as a preassembled complex. The IB complex does not contain PRPF19. Interacts with CPSF3; this interaction is in an RNA independent manner (By similarity). Interacts with the microprocessor complex subunits DGCR8 and DROSHA; this interaction is in an RNA dependent manner (By similarity).</text>
</comment>
<comment type="subcellular location">
    <subcellularLocation>
        <location evidence="2">Nucleus</location>
    </subcellularLocation>
</comment>
<comment type="similarity">
    <text evidence="4">Belongs to the ISY1 family.</text>
</comment>
<evidence type="ECO:0000250" key="1">
    <source>
        <dbReference type="UniProtKB" id="Q69ZQ2"/>
    </source>
</evidence>
<evidence type="ECO:0000250" key="2">
    <source>
        <dbReference type="UniProtKB" id="Q9ULR0"/>
    </source>
</evidence>
<evidence type="ECO:0000256" key="3">
    <source>
        <dbReference type="SAM" id="MobiDB-lite"/>
    </source>
</evidence>
<evidence type="ECO:0000305" key="4"/>
<dbReference type="EMBL" id="BC079119">
    <property type="protein sequence ID" value="AAH79119.1"/>
    <property type="molecule type" value="mRNA"/>
</dbReference>
<dbReference type="RefSeq" id="NP_001014210.1">
    <property type="nucleotide sequence ID" value="NM_001014188.1"/>
</dbReference>
<dbReference type="SMR" id="Q6AYB3"/>
<dbReference type="FunCoup" id="Q6AYB3">
    <property type="interactions" value="3624"/>
</dbReference>
<dbReference type="IntAct" id="Q6AYB3">
    <property type="interactions" value="1"/>
</dbReference>
<dbReference type="STRING" id="10116.ENSRNOP00000013571"/>
<dbReference type="iPTMnet" id="Q6AYB3"/>
<dbReference type="PhosphoSitePlus" id="Q6AYB3"/>
<dbReference type="PaxDb" id="10116-ENSRNOP00000013571"/>
<dbReference type="Ensembl" id="ENSRNOT00000013571.6">
    <property type="protein sequence ID" value="ENSRNOP00000013571.4"/>
    <property type="gene ID" value="ENSRNOG00000010021.6"/>
</dbReference>
<dbReference type="GeneID" id="362394"/>
<dbReference type="KEGG" id="rno:362394"/>
<dbReference type="UCSC" id="RGD:1307688">
    <property type="organism name" value="rat"/>
</dbReference>
<dbReference type="AGR" id="RGD:1307688"/>
<dbReference type="CTD" id="57461"/>
<dbReference type="RGD" id="1307688">
    <property type="gene designation" value="Isy1"/>
</dbReference>
<dbReference type="eggNOG" id="KOG3068">
    <property type="taxonomic scope" value="Eukaryota"/>
</dbReference>
<dbReference type="GeneTree" id="ENSGT00390000014109"/>
<dbReference type="HOGENOM" id="CLU_043453_0_0_1"/>
<dbReference type="InParanoid" id="Q6AYB3"/>
<dbReference type="OMA" id="YHWERRI"/>
<dbReference type="OrthoDB" id="1739576at2759"/>
<dbReference type="PhylomeDB" id="Q6AYB3"/>
<dbReference type="TreeFam" id="TF105841"/>
<dbReference type="Reactome" id="R-RNO-6781823">
    <property type="pathway name" value="Formation of TC-NER Pre-Incision Complex"/>
</dbReference>
<dbReference type="Reactome" id="R-RNO-6782135">
    <property type="pathway name" value="Dual incision in TC-NER"/>
</dbReference>
<dbReference type="Reactome" id="R-RNO-6782210">
    <property type="pathway name" value="Gap-filling DNA repair synthesis and ligation in TC-NER"/>
</dbReference>
<dbReference type="Reactome" id="R-RNO-72163">
    <property type="pathway name" value="mRNA Splicing - Major Pathway"/>
</dbReference>
<dbReference type="PRO" id="PR:Q6AYB3"/>
<dbReference type="Proteomes" id="UP000002494">
    <property type="component" value="Chromosome 4"/>
</dbReference>
<dbReference type="Bgee" id="ENSRNOG00000010021">
    <property type="expression patterns" value="Expressed in thymus and 19 other cell types or tissues"/>
</dbReference>
<dbReference type="GO" id="GO:0071013">
    <property type="term" value="C:catalytic step 2 spliceosome"/>
    <property type="evidence" value="ECO:0000266"/>
    <property type="project" value="RGD"/>
</dbReference>
<dbReference type="GO" id="GO:0005634">
    <property type="term" value="C:nucleus"/>
    <property type="evidence" value="ECO:0000250"/>
    <property type="project" value="UniProtKB"/>
</dbReference>
<dbReference type="GO" id="GO:0071014">
    <property type="term" value="C:post-mRNA release spliceosomal complex"/>
    <property type="evidence" value="ECO:0000318"/>
    <property type="project" value="GO_Central"/>
</dbReference>
<dbReference type="GO" id="GO:0071020">
    <property type="term" value="C:post-spliceosomal complex"/>
    <property type="evidence" value="ECO:0000318"/>
    <property type="project" value="GO_Central"/>
</dbReference>
<dbReference type="GO" id="GO:0000974">
    <property type="term" value="C:Prp19 complex"/>
    <property type="evidence" value="ECO:0000318"/>
    <property type="project" value="GO_Central"/>
</dbReference>
<dbReference type="GO" id="GO:0071006">
    <property type="term" value="C:U2-type catalytic step 1 spliceosome"/>
    <property type="evidence" value="ECO:0000250"/>
    <property type="project" value="UniProtKB"/>
</dbReference>
<dbReference type="GO" id="GO:0000350">
    <property type="term" value="P:generation of catalytic spliceosome for second transesterification step"/>
    <property type="evidence" value="ECO:0000318"/>
    <property type="project" value="GO_Central"/>
</dbReference>
<dbReference type="GO" id="GO:0000389">
    <property type="term" value="P:mRNA 3'-splice site recognition"/>
    <property type="evidence" value="ECO:0000318"/>
    <property type="project" value="GO_Central"/>
</dbReference>
<dbReference type="GO" id="GO:0000398">
    <property type="term" value="P:mRNA splicing, via spliceosome"/>
    <property type="evidence" value="ECO:0000250"/>
    <property type="project" value="UniProtKB"/>
</dbReference>
<dbReference type="FunFam" id="1.10.287.660:FF:000001">
    <property type="entry name" value="pre-mRNA-splicing factor ISY1 homolog"/>
    <property type="match status" value="1"/>
</dbReference>
<dbReference type="Gene3D" id="1.10.287.660">
    <property type="entry name" value="Helix hairpin bin"/>
    <property type="match status" value="1"/>
</dbReference>
<dbReference type="InterPro" id="IPR029012">
    <property type="entry name" value="Helix_hairpin_bin_sf"/>
</dbReference>
<dbReference type="InterPro" id="IPR009360">
    <property type="entry name" value="Isy1"/>
</dbReference>
<dbReference type="InterPro" id="IPR037200">
    <property type="entry name" value="Isy1_sf"/>
</dbReference>
<dbReference type="PANTHER" id="PTHR13021">
    <property type="entry name" value="PRE-MRNA-SPLICING FACTOR ISY1"/>
    <property type="match status" value="1"/>
</dbReference>
<dbReference type="Pfam" id="PF06246">
    <property type="entry name" value="Isy1"/>
    <property type="match status" value="1"/>
</dbReference>
<dbReference type="SUPFAM" id="SSF140102">
    <property type="entry name" value="ISY1 domain-like"/>
    <property type="match status" value="1"/>
</dbReference>
<gene>
    <name type="primary">Isy1</name>
</gene>
<reference key="1">
    <citation type="journal article" date="2004" name="Genome Res.">
        <title>The status, quality, and expansion of the NIH full-length cDNA project: the Mammalian Gene Collection (MGC).</title>
        <authorList>
            <consortium name="The MGC Project Team"/>
        </authorList>
    </citation>
    <scope>NUCLEOTIDE SEQUENCE [LARGE SCALE MRNA]</scope>
    <source>
        <tissue>Kidney</tissue>
    </source>
</reference>
<sequence length="284" mass="32861">MARNAEKAMTALARFRQAQLEEGKVKERRPFLASECTELPKAEKWRRQIIGEISKKVAQIQNAGLGEFRIRDLNDEINKLLREKGHWEVRIKELGGPDYGKVGPKMLDHEGKEVPGNRGYKYFGAAKDLPGVRELFEKEPLPPPRKTRAELMKAIDFEYYGYLDEDDGVIVPLEQEYEKRLRAELVEKWKAEREARLARGEKEEEEEEEEINIYAVTEEESDEEGSQEKAGEDGQQKFIAHVPVPSQQEIEEALVRRKKMELLQKYASETLQAQSEEAKRLLGY</sequence>
<keyword id="KW-0007">Acetylation</keyword>
<keyword id="KW-0507">mRNA processing</keyword>
<keyword id="KW-0508">mRNA splicing</keyword>
<keyword id="KW-0539">Nucleus</keyword>
<keyword id="KW-0597">Phosphoprotein</keyword>
<keyword id="KW-1185">Reference proteome</keyword>
<keyword id="KW-0747">Spliceosome</keyword>
<accession>Q6AYB3</accession>
<feature type="chain" id="PRO_0000235815" description="Pre-mRNA-splicing factor ISY1 homolog">
    <location>
        <begin position="1"/>
        <end position="284"/>
    </location>
</feature>
<feature type="region of interest" description="Disordered" evidence="3">
    <location>
        <begin position="196"/>
        <end position="243"/>
    </location>
</feature>
<feature type="compositionally biased region" description="Acidic residues" evidence="3">
    <location>
        <begin position="203"/>
        <end position="225"/>
    </location>
</feature>
<feature type="compositionally biased region" description="Basic and acidic residues" evidence="3">
    <location>
        <begin position="226"/>
        <end position="235"/>
    </location>
</feature>
<feature type="modified residue" description="N6-acetyllysine" evidence="2">
    <location>
        <position position="127"/>
    </location>
</feature>
<feature type="modified residue" description="Phosphoserine" evidence="2">
    <location>
        <position position="246"/>
    </location>
</feature>
<name>ISY1_RAT</name>
<organism>
    <name type="scientific">Rattus norvegicus</name>
    <name type="common">Rat</name>
    <dbReference type="NCBI Taxonomy" id="10116"/>
    <lineage>
        <taxon>Eukaryota</taxon>
        <taxon>Metazoa</taxon>
        <taxon>Chordata</taxon>
        <taxon>Craniata</taxon>
        <taxon>Vertebrata</taxon>
        <taxon>Euteleostomi</taxon>
        <taxon>Mammalia</taxon>
        <taxon>Eutheria</taxon>
        <taxon>Euarchontoglires</taxon>
        <taxon>Glires</taxon>
        <taxon>Rodentia</taxon>
        <taxon>Myomorpha</taxon>
        <taxon>Muroidea</taxon>
        <taxon>Muridae</taxon>
        <taxon>Murinae</taxon>
        <taxon>Rattus</taxon>
    </lineage>
</organism>
<protein>
    <recommendedName>
        <fullName>Pre-mRNA-splicing factor ISY1 homolog</fullName>
    </recommendedName>
</protein>